<protein>
    <recommendedName>
        <fullName evidence="1">UvrABC system protein C</fullName>
        <shortName evidence="1">Protein UvrC</shortName>
    </recommendedName>
    <alternativeName>
        <fullName evidence="1">Excinuclease ABC subunit C</fullName>
    </alternativeName>
</protein>
<evidence type="ECO:0000255" key="1">
    <source>
        <dbReference type="HAMAP-Rule" id="MF_00203"/>
    </source>
</evidence>
<gene>
    <name evidence="1" type="primary">uvrC</name>
    <name type="ordered locus">lhv_1040</name>
</gene>
<keyword id="KW-0963">Cytoplasm</keyword>
<keyword id="KW-0227">DNA damage</keyword>
<keyword id="KW-0228">DNA excision</keyword>
<keyword id="KW-0234">DNA repair</keyword>
<keyword id="KW-0267">Excision nuclease</keyword>
<keyword id="KW-0742">SOS response</keyword>
<dbReference type="EMBL" id="CP000517">
    <property type="protein sequence ID" value="ABX27101.1"/>
    <property type="molecule type" value="Genomic_DNA"/>
</dbReference>
<dbReference type="RefSeq" id="WP_012211803.1">
    <property type="nucleotide sequence ID" value="NC_010080.1"/>
</dbReference>
<dbReference type="SMR" id="A8YV13"/>
<dbReference type="KEGG" id="lhe:lhv_1040"/>
<dbReference type="eggNOG" id="COG0322">
    <property type="taxonomic scope" value="Bacteria"/>
</dbReference>
<dbReference type="HOGENOM" id="CLU_014841_3_2_9"/>
<dbReference type="Proteomes" id="UP000000790">
    <property type="component" value="Chromosome"/>
</dbReference>
<dbReference type="GO" id="GO:0005737">
    <property type="term" value="C:cytoplasm"/>
    <property type="evidence" value="ECO:0007669"/>
    <property type="project" value="UniProtKB-SubCell"/>
</dbReference>
<dbReference type="GO" id="GO:0009380">
    <property type="term" value="C:excinuclease repair complex"/>
    <property type="evidence" value="ECO:0007669"/>
    <property type="project" value="InterPro"/>
</dbReference>
<dbReference type="GO" id="GO:0003677">
    <property type="term" value="F:DNA binding"/>
    <property type="evidence" value="ECO:0007669"/>
    <property type="project" value="UniProtKB-UniRule"/>
</dbReference>
<dbReference type="GO" id="GO:0009381">
    <property type="term" value="F:excinuclease ABC activity"/>
    <property type="evidence" value="ECO:0007669"/>
    <property type="project" value="UniProtKB-UniRule"/>
</dbReference>
<dbReference type="GO" id="GO:0006289">
    <property type="term" value="P:nucleotide-excision repair"/>
    <property type="evidence" value="ECO:0007669"/>
    <property type="project" value="UniProtKB-UniRule"/>
</dbReference>
<dbReference type="GO" id="GO:0009432">
    <property type="term" value="P:SOS response"/>
    <property type="evidence" value="ECO:0007669"/>
    <property type="project" value="UniProtKB-UniRule"/>
</dbReference>
<dbReference type="CDD" id="cd10434">
    <property type="entry name" value="GIY-YIG_UvrC_Cho"/>
    <property type="match status" value="1"/>
</dbReference>
<dbReference type="FunFam" id="3.40.1440.10:FF:000001">
    <property type="entry name" value="UvrABC system protein C"/>
    <property type="match status" value="1"/>
</dbReference>
<dbReference type="FunFam" id="4.10.860.10:FF:000002">
    <property type="entry name" value="UvrABC system protein C"/>
    <property type="match status" value="1"/>
</dbReference>
<dbReference type="Gene3D" id="1.10.150.20">
    <property type="entry name" value="5' to 3' exonuclease, C-terminal subdomain"/>
    <property type="match status" value="1"/>
</dbReference>
<dbReference type="Gene3D" id="3.40.1440.10">
    <property type="entry name" value="GIY-YIG endonuclease"/>
    <property type="match status" value="1"/>
</dbReference>
<dbReference type="Gene3D" id="4.10.860.10">
    <property type="entry name" value="UVR domain"/>
    <property type="match status" value="1"/>
</dbReference>
<dbReference type="Gene3D" id="3.30.420.340">
    <property type="entry name" value="UvrC, RNAse H endonuclease domain"/>
    <property type="match status" value="1"/>
</dbReference>
<dbReference type="HAMAP" id="MF_00203">
    <property type="entry name" value="UvrC"/>
    <property type="match status" value="1"/>
</dbReference>
<dbReference type="InterPro" id="IPR000305">
    <property type="entry name" value="GIY-YIG_endonuc"/>
</dbReference>
<dbReference type="InterPro" id="IPR035901">
    <property type="entry name" value="GIY-YIG_endonuc_sf"/>
</dbReference>
<dbReference type="InterPro" id="IPR047296">
    <property type="entry name" value="GIY-YIG_UvrC_Cho"/>
</dbReference>
<dbReference type="InterPro" id="IPR010994">
    <property type="entry name" value="RuvA_2-like"/>
</dbReference>
<dbReference type="InterPro" id="IPR001943">
    <property type="entry name" value="UVR_dom"/>
</dbReference>
<dbReference type="InterPro" id="IPR036876">
    <property type="entry name" value="UVR_dom_sf"/>
</dbReference>
<dbReference type="InterPro" id="IPR050066">
    <property type="entry name" value="UvrABC_protein_C"/>
</dbReference>
<dbReference type="InterPro" id="IPR004791">
    <property type="entry name" value="UvrC"/>
</dbReference>
<dbReference type="InterPro" id="IPR001162">
    <property type="entry name" value="UvrC_RNase_H_dom"/>
</dbReference>
<dbReference type="InterPro" id="IPR038476">
    <property type="entry name" value="UvrC_RNase_H_dom_sf"/>
</dbReference>
<dbReference type="NCBIfam" id="TIGR00194">
    <property type="entry name" value="uvrC"/>
    <property type="match status" value="1"/>
</dbReference>
<dbReference type="PANTHER" id="PTHR30562:SF1">
    <property type="entry name" value="UVRABC SYSTEM PROTEIN C"/>
    <property type="match status" value="1"/>
</dbReference>
<dbReference type="PANTHER" id="PTHR30562">
    <property type="entry name" value="UVRC/OXIDOREDUCTASE"/>
    <property type="match status" value="1"/>
</dbReference>
<dbReference type="Pfam" id="PF01541">
    <property type="entry name" value="GIY-YIG"/>
    <property type="match status" value="1"/>
</dbReference>
<dbReference type="Pfam" id="PF14520">
    <property type="entry name" value="HHH_5"/>
    <property type="match status" value="1"/>
</dbReference>
<dbReference type="Pfam" id="PF02151">
    <property type="entry name" value="UVR"/>
    <property type="match status" value="1"/>
</dbReference>
<dbReference type="Pfam" id="PF22920">
    <property type="entry name" value="UvrC_RNaseH"/>
    <property type="match status" value="1"/>
</dbReference>
<dbReference type="Pfam" id="PF08459">
    <property type="entry name" value="UvrC_RNaseH_dom"/>
    <property type="match status" value="1"/>
</dbReference>
<dbReference type="SMART" id="SM00465">
    <property type="entry name" value="GIYc"/>
    <property type="match status" value="1"/>
</dbReference>
<dbReference type="SUPFAM" id="SSF46600">
    <property type="entry name" value="C-terminal UvrC-binding domain of UvrB"/>
    <property type="match status" value="1"/>
</dbReference>
<dbReference type="SUPFAM" id="SSF82771">
    <property type="entry name" value="GIY-YIG endonuclease"/>
    <property type="match status" value="1"/>
</dbReference>
<dbReference type="SUPFAM" id="SSF47781">
    <property type="entry name" value="RuvA domain 2-like"/>
    <property type="match status" value="1"/>
</dbReference>
<dbReference type="PROSITE" id="PS50164">
    <property type="entry name" value="GIY_YIG"/>
    <property type="match status" value="1"/>
</dbReference>
<dbReference type="PROSITE" id="PS50151">
    <property type="entry name" value="UVR"/>
    <property type="match status" value="1"/>
</dbReference>
<dbReference type="PROSITE" id="PS50165">
    <property type="entry name" value="UVRC"/>
    <property type="match status" value="1"/>
</dbReference>
<comment type="function">
    <text evidence="1">The UvrABC repair system catalyzes the recognition and processing of DNA lesions. UvrC both incises the 5' and 3' sides of the lesion. The N-terminal half is responsible for the 3' incision and the C-terminal half is responsible for the 5' incision.</text>
</comment>
<comment type="subunit">
    <text evidence="1">Interacts with UvrB in an incision complex.</text>
</comment>
<comment type="subcellular location">
    <subcellularLocation>
        <location evidence="1">Cytoplasm</location>
    </subcellularLocation>
</comment>
<comment type="similarity">
    <text evidence="1">Belongs to the UvrC family.</text>
</comment>
<reference key="1">
    <citation type="journal article" date="2008" name="J. Bacteriol.">
        <title>Genome sequence of Lactobacillus helveticus: an organism distinguished by selective gene loss and IS element expansion.</title>
        <authorList>
            <person name="Callanan M."/>
            <person name="Kaleta P."/>
            <person name="O'Callaghan J."/>
            <person name="O'Sullivan O."/>
            <person name="Jordan K."/>
            <person name="McAuliffe O."/>
            <person name="Sangrador-Vegas A."/>
            <person name="Slattery L."/>
            <person name="Fitzgerald G.F."/>
            <person name="Beresford T."/>
            <person name="Ross R.P."/>
        </authorList>
    </citation>
    <scope>NUCLEOTIDE SEQUENCE [LARGE SCALE GENOMIC DNA]</scope>
    <source>
        <strain>DPC 4571</strain>
    </source>
</reference>
<organism>
    <name type="scientific">Lactobacillus helveticus (strain DPC 4571)</name>
    <dbReference type="NCBI Taxonomy" id="405566"/>
    <lineage>
        <taxon>Bacteria</taxon>
        <taxon>Bacillati</taxon>
        <taxon>Bacillota</taxon>
        <taxon>Bacilli</taxon>
        <taxon>Lactobacillales</taxon>
        <taxon>Lactobacillaceae</taxon>
        <taxon>Lactobacillus</taxon>
    </lineage>
</organism>
<feature type="chain" id="PRO_1000077799" description="UvrABC system protein C">
    <location>
        <begin position="1"/>
        <end position="600"/>
    </location>
</feature>
<feature type="domain" description="GIY-YIG" evidence="1">
    <location>
        <begin position="15"/>
        <end position="92"/>
    </location>
</feature>
<feature type="domain" description="UVR" evidence="1">
    <location>
        <begin position="197"/>
        <end position="232"/>
    </location>
</feature>
<accession>A8YV13</accession>
<proteinExistence type="inferred from homology"/>
<sequence length="600" mass="69249">MATQLIENKLKLLPEKPGCYLMKDINGTVIYVGKSKNLKNRVRSYFKSKQVGRRAELVREIRDYDIITVSTDKEAFLLEITLIKKYQPYYNVQLKQGTGYPYIEITREHDPQTRLTSIVCKDGGYYFGPYPNVYAAQATLKFIQKVFPLRRCHGYQGRPCLYYHMGQCLGACFKKVPQKEYDEQIKKIKRFLNGDIGAVKQDLTQKMEQASEQLEFERAAEIRDQLKYIEETVEKQKIISNDNTQRDIFNYYVDKSWISIQIFFLRQAKLLRRETRMFPLTDITDPEDAFTSFIVQFYGQKNRVLPKEVLIPAGFDNDTLAEVLTVPVRTPQRGQKKSLLDMAKDNAKLKLDDKFRLLELGNRKTKGAQKEIFDALGLPYGHIIESFDHSHIQGADPVSALVVFKDGEPDKTAYRKYKLKGEVEHQNGGDEVRNTREVVRRRYGRLLREHKKMPDLILMDGGQIQVDACEDVLRNELNLNIPVAGMVKDDKHRTNHLLFGDPINGVPLKLIPLNPKSEGFYLMTRIQDEVHRFAITFHRRRHAKNALSSRLDSIKGIGPKSRNKLLRKFGSLKKIKEASVDDLRAAGLTLPQAQTVKLML</sequence>
<name>UVRC_LACH4</name>